<organism>
    <name type="scientific">Mycobacteroides abscessus (strain ATCC 19977 / DSM 44196 / CCUG 20993 / CIP 104536 / JCM 13569 / NCTC 13031 / TMC 1543 / L948)</name>
    <name type="common">Mycobacterium abscessus</name>
    <dbReference type="NCBI Taxonomy" id="561007"/>
    <lineage>
        <taxon>Bacteria</taxon>
        <taxon>Bacillati</taxon>
        <taxon>Actinomycetota</taxon>
        <taxon>Actinomycetes</taxon>
        <taxon>Mycobacteriales</taxon>
        <taxon>Mycobacteriaceae</taxon>
        <taxon>Mycobacteroides</taxon>
        <taxon>Mycobacteroides abscessus</taxon>
    </lineage>
</organism>
<reference key="1">
    <citation type="journal article" date="2009" name="PLoS ONE">
        <title>Non mycobacterial virulence genes in the genome of the emerging pathogen Mycobacterium abscessus.</title>
        <authorList>
            <person name="Ripoll F."/>
            <person name="Pasek S."/>
            <person name="Schenowitz C."/>
            <person name="Dossat C."/>
            <person name="Barbe V."/>
            <person name="Rottman M."/>
            <person name="Macheras E."/>
            <person name="Heym B."/>
            <person name="Herrmann J.L."/>
            <person name="Daffe M."/>
            <person name="Brosch R."/>
            <person name="Risler J.L."/>
            <person name="Gaillard J.L."/>
        </authorList>
    </citation>
    <scope>NUCLEOTIDE SEQUENCE [LARGE SCALE GENOMIC DNA]</scope>
    <source>
        <strain>ATCC 19977 / DSM 44196 / CCUG 20993 / CIP 104536 / JCM 13569 / NCTC 13031 / TMC 1543 / L948</strain>
    </source>
</reference>
<keyword id="KW-0175">Coiled coil</keyword>
<keyword id="KW-0238">DNA-binding</keyword>
<keyword id="KW-1185">Reference proteome</keyword>
<keyword id="KW-0804">Transcription</keyword>
<keyword id="KW-0805">Transcription regulation</keyword>
<protein>
    <recommendedName>
        <fullName evidence="1">Transcription elongation factor GreA</fullName>
    </recommendedName>
    <alternativeName>
        <fullName evidence="1">Transcript cleavage factor GreA</fullName>
    </alternativeName>
</protein>
<sequence length="164" mass="18007">MTDTQVTWLTQESHDRLKAELDQLIANRPVIAAEINERREEGDLRENGGYHAAREEQGQQEARIRQLQELLNNAKVGEAPTQSGVALPGSVVKVYYDGDKGDTETFLIATRQEGVKDGKLEVYSPSSPLGGALIDAKVGETRSYTVPNGTEVQVTLVSAEPYHE</sequence>
<evidence type="ECO:0000255" key="1">
    <source>
        <dbReference type="HAMAP-Rule" id="MF_00105"/>
    </source>
</evidence>
<gene>
    <name evidence="1" type="primary">greA</name>
    <name type="ordered locus">MAB_1201c</name>
</gene>
<proteinExistence type="inferred from homology"/>
<comment type="function">
    <text evidence="1">Necessary for efficient RNA polymerase transcription elongation past template-encoded arresting sites. The arresting sites in DNA have the property of trapping a certain fraction of elongating RNA polymerases that pass through, resulting in locked ternary complexes. Cleavage of the nascent transcript by cleavage factors such as GreA or GreB allows the resumption of elongation from the new 3'terminus. GreA releases sequences of 2 to 3 nucleotides.</text>
</comment>
<comment type="similarity">
    <text evidence="1">Belongs to the GreA/GreB family.</text>
</comment>
<accession>B1MKJ7</accession>
<dbReference type="EMBL" id="CU458896">
    <property type="protein sequence ID" value="CAM61289.1"/>
    <property type="molecule type" value="Genomic_DNA"/>
</dbReference>
<dbReference type="RefSeq" id="WP_005059312.1">
    <property type="nucleotide sequence ID" value="NZ_MLCG01000004.1"/>
</dbReference>
<dbReference type="SMR" id="B1MKJ7"/>
<dbReference type="GeneID" id="93378151"/>
<dbReference type="KEGG" id="mab:MAB_1201c"/>
<dbReference type="Proteomes" id="UP000007137">
    <property type="component" value="Chromosome"/>
</dbReference>
<dbReference type="GO" id="GO:0003677">
    <property type="term" value="F:DNA binding"/>
    <property type="evidence" value="ECO:0007669"/>
    <property type="project" value="UniProtKB-UniRule"/>
</dbReference>
<dbReference type="GO" id="GO:0070063">
    <property type="term" value="F:RNA polymerase binding"/>
    <property type="evidence" value="ECO:0007669"/>
    <property type="project" value="InterPro"/>
</dbReference>
<dbReference type="GO" id="GO:0006354">
    <property type="term" value="P:DNA-templated transcription elongation"/>
    <property type="evidence" value="ECO:0007669"/>
    <property type="project" value="TreeGrafter"/>
</dbReference>
<dbReference type="GO" id="GO:0032784">
    <property type="term" value="P:regulation of DNA-templated transcription elongation"/>
    <property type="evidence" value="ECO:0007669"/>
    <property type="project" value="UniProtKB-UniRule"/>
</dbReference>
<dbReference type="FunFam" id="1.10.287.180:FF:000001">
    <property type="entry name" value="Transcription elongation factor GreA"/>
    <property type="match status" value="1"/>
</dbReference>
<dbReference type="Gene3D" id="3.10.50.30">
    <property type="entry name" value="Transcription elongation factor, GreA/GreB, C-terminal domain"/>
    <property type="match status" value="1"/>
</dbReference>
<dbReference type="Gene3D" id="1.10.287.180">
    <property type="entry name" value="Transcription elongation factor, GreA/GreB, N-terminal domain"/>
    <property type="match status" value="1"/>
</dbReference>
<dbReference type="HAMAP" id="MF_00105">
    <property type="entry name" value="GreA_GreB"/>
    <property type="match status" value="1"/>
</dbReference>
<dbReference type="InterPro" id="IPR036953">
    <property type="entry name" value="GreA/GreB_C_sf"/>
</dbReference>
<dbReference type="InterPro" id="IPR018151">
    <property type="entry name" value="TF_GreA/GreB_CS"/>
</dbReference>
<dbReference type="InterPro" id="IPR006359">
    <property type="entry name" value="Tscrpt_elong_fac_GreA"/>
</dbReference>
<dbReference type="InterPro" id="IPR028624">
    <property type="entry name" value="Tscrpt_elong_fac_GreA/B"/>
</dbReference>
<dbReference type="InterPro" id="IPR001437">
    <property type="entry name" value="Tscrpt_elong_fac_GreA/B_C"/>
</dbReference>
<dbReference type="InterPro" id="IPR023459">
    <property type="entry name" value="Tscrpt_elong_fac_GreA/B_fam"/>
</dbReference>
<dbReference type="InterPro" id="IPR022691">
    <property type="entry name" value="Tscrpt_elong_fac_GreA/B_N"/>
</dbReference>
<dbReference type="InterPro" id="IPR036805">
    <property type="entry name" value="Tscrpt_elong_fac_GreA/B_N_sf"/>
</dbReference>
<dbReference type="NCBIfam" id="TIGR01462">
    <property type="entry name" value="greA"/>
    <property type="match status" value="1"/>
</dbReference>
<dbReference type="NCBIfam" id="NF001262">
    <property type="entry name" value="PRK00226.1-3"/>
    <property type="match status" value="1"/>
</dbReference>
<dbReference type="PANTHER" id="PTHR30437">
    <property type="entry name" value="TRANSCRIPTION ELONGATION FACTOR GREA"/>
    <property type="match status" value="1"/>
</dbReference>
<dbReference type="PANTHER" id="PTHR30437:SF4">
    <property type="entry name" value="TRANSCRIPTION ELONGATION FACTOR GREA"/>
    <property type="match status" value="1"/>
</dbReference>
<dbReference type="Pfam" id="PF01272">
    <property type="entry name" value="GreA_GreB"/>
    <property type="match status" value="1"/>
</dbReference>
<dbReference type="Pfam" id="PF03449">
    <property type="entry name" value="GreA_GreB_N"/>
    <property type="match status" value="1"/>
</dbReference>
<dbReference type="PIRSF" id="PIRSF006092">
    <property type="entry name" value="GreA_GreB"/>
    <property type="match status" value="1"/>
</dbReference>
<dbReference type="SUPFAM" id="SSF54534">
    <property type="entry name" value="FKBP-like"/>
    <property type="match status" value="1"/>
</dbReference>
<dbReference type="SUPFAM" id="SSF46557">
    <property type="entry name" value="GreA transcript cleavage protein, N-terminal domain"/>
    <property type="match status" value="1"/>
</dbReference>
<dbReference type="PROSITE" id="PS00829">
    <property type="entry name" value="GREAB_1"/>
    <property type="match status" value="1"/>
</dbReference>
<dbReference type="PROSITE" id="PS00830">
    <property type="entry name" value="GREAB_2"/>
    <property type="match status" value="1"/>
</dbReference>
<feature type="chain" id="PRO_1000094177" description="Transcription elongation factor GreA">
    <location>
        <begin position="1"/>
        <end position="164"/>
    </location>
</feature>
<feature type="coiled-coil region" evidence="1">
    <location>
        <begin position="50"/>
        <end position="76"/>
    </location>
</feature>
<name>GREA_MYCA9</name>